<dbReference type="EC" id="4.3.2.10" evidence="1"/>
<dbReference type="EMBL" id="CP000946">
    <property type="protein sequence ID" value="ACA77275.1"/>
    <property type="molecule type" value="Genomic_DNA"/>
</dbReference>
<dbReference type="RefSeq" id="WP_000880192.1">
    <property type="nucleotide sequence ID" value="NZ_MTFT01000023.1"/>
</dbReference>
<dbReference type="SMR" id="B1IZ49"/>
<dbReference type="KEGG" id="ecl:EcolC_1617"/>
<dbReference type="HOGENOM" id="CLU_048577_4_0_6"/>
<dbReference type="UniPathway" id="UPA00031">
    <property type="reaction ID" value="UER00010"/>
</dbReference>
<dbReference type="GO" id="GO:0005737">
    <property type="term" value="C:cytoplasm"/>
    <property type="evidence" value="ECO:0007669"/>
    <property type="project" value="UniProtKB-SubCell"/>
</dbReference>
<dbReference type="GO" id="GO:0000107">
    <property type="term" value="F:imidazoleglycerol-phosphate synthase activity"/>
    <property type="evidence" value="ECO:0007669"/>
    <property type="project" value="UniProtKB-UniRule"/>
</dbReference>
<dbReference type="GO" id="GO:0016829">
    <property type="term" value="F:lyase activity"/>
    <property type="evidence" value="ECO:0007669"/>
    <property type="project" value="UniProtKB-KW"/>
</dbReference>
<dbReference type="GO" id="GO:0000105">
    <property type="term" value="P:L-histidine biosynthetic process"/>
    <property type="evidence" value="ECO:0007669"/>
    <property type="project" value="UniProtKB-UniRule"/>
</dbReference>
<dbReference type="CDD" id="cd04731">
    <property type="entry name" value="HisF"/>
    <property type="match status" value="1"/>
</dbReference>
<dbReference type="FunFam" id="3.20.20.70:FF:000006">
    <property type="entry name" value="Imidazole glycerol phosphate synthase subunit HisF"/>
    <property type="match status" value="1"/>
</dbReference>
<dbReference type="Gene3D" id="3.20.20.70">
    <property type="entry name" value="Aldolase class I"/>
    <property type="match status" value="1"/>
</dbReference>
<dbReference type="HAMAP" id="MF_01013">
    <property type="entry name" value="HisF"/>
    <property type="match status" value="1"/>
</dbReference>
<dbReference type="InterPro" id="IPR013785">
    <property type="entry name" value="Aldolase_TIM"/>
</dbReference>
<dbReference type="InterPro" id="IPR006062">
    <property type="entry name" value="His_biosynth"/>
</dbReference>
<dbReference type="InterPro" id="IPR004651">
    <property type="entry name" value="HisF"/>
</dbReference>
<dbReference type="InterPro" id="IPR050064">
    <property type="entry name" value="IGPS_HisA/HisF"/>
</dbReference>
<dbReference type="InterPro" id="IPR011060">
    <property type="entry name" value="RibuloseP-bd_barrel"/>
</dbReference>
<dbReference type="NCBIfam" id="TIGR00735">
    <property type="entry name" value="hisF"/>
    <property type="match status" value="1"/>
</dbReference>
<dbReference type="PANTHER" id="PTHR21235:SF2">
    <property type="entry name" value="IMIDAZOLE GLYCEROL PHOSPHATE SYNTHASE HISHF"/>
    <property type="match status" value="1"/>
</dbReference>
<dbReference type="PANTHER" id="PTHR21235">
    <property type="entry name" value="IMIDAZOLE GLYCEROL PHOSPHATE SYNTHASE SUBUNIT HISF/H IGP SYNTHASE SUBUNIT HISF/H"/>
    <property type="match status" value="1"/>
</dbReference>
<dbReference type="Pfam" id="PF00977">
    <property type="entry name" value="His_biosynth"/>
    <property type="match status" value="1"/>
</dbReference>
<dbReference type="SUPFAM" id="SSF51366">
    <property type="entry name" value="Ribulose-phoshate binding barrel"/>
    <property type="match status" value="1"/>
</dbReference>
<comment type="function">
    <text evidence="1">IGPS catalyzes the conversion of PRFAR and glutamine to IGP, AICAR and glutamate. The HisF subunit catalyzes the cyclization activity that produces IGP and AICAR from PRFAR using the ammonia provided by the HisH subunit.</text>
</comment>
<comment type="catalytic activity">
    <reaction evidence="1">
        <text>5-[(5-phospho-1-deoxy-D-ribulos-1-ylimino)methylamino]-1-(5-phospho-beta-D-ribosyl)imidazole-4-carboxamide + L-glutamine = D-erythro-1-(imidazol-4-yl)glycerol 3-phosphate + 5-amino-1-(5-phospho-beta-D-ribosyl)imidazole-4-carboxamide + L-glutamate + H(+)</text>
        <dbReference type="Rhea" id="RHEA:24793"/>
        <dbReference type="ChEBI" id="CHEBI:15378"/>
        <dbReference type="ChEBI" id="CHEBI:29985"/>
        <dbReference type="ChEBI" id="CHEBI:58278"/>
        <dbReference type="ChEBI" id="CHEBI:58359"/>
        <dbReference type="ChEBI" id="CHEBI:58475"/>
        <dbReference type="ChEBI" id="CHEBI:58525"/>
        <dbReference type="EC" id="4.3.2.10"/>
    </reaction>
</comment>
<comment type="pathway">
    <text evidence="1">Amino-acid biosynthesis; L-histidine biosynthesis; L-histidine from 5-phospho-alpha-D-ribose 1-diphosphate: step 5/9.</text>
</comment>
<comment type="subunit">
    <text evidence="1">Heterodimer of HisH and HisF.</text>
</comment>
<comment type="subcellular location">
    <subcellularLocation>
        <location evidence="1">Cytoplasm</location>
    </subcellularLocation>
</comment>
<comment type="similarity">
    <text evidence="1">Belongs to the HisA/HisF family.</text>
</comment>
<proteinExistence type="inferred from homology"/>
<sequence>MLAKRIIPCLDVRDGQVVKGVQFRNHEIIGDIVPLAKRYAEEGADELVFYDITASSDGRVVDKSWVSRVAEVIDIPFCVAGGIKSLEDAAKILSFGADKISINSPALADPTLITRLADRFGVQCIVVGIDTWYDGETGKYHVNQYTGDESRTRVTQWETLDWVEEVQKRGAGEIVLNMMNQDGVRNGYDLEQLKKVREVCHVPLIASGGAGTMEHFLEAFRDADVDGALAASVFHKQIINIGELKAYLATQGVEIRIC</sequence>
<protein>
    <recommendedName>
        <fullName evidence="1">Imidazole glycerol phosphate synthase subunit HisF</fullName>
        <ecNumber evidence="1">4.3.2.10</ecNumber>
    </recommendedName>
    <alternativeName>
        <fullName evidence="1">IGP synthase cyclase subunit</fullName>
    </alternativeName>
    <alternativeName>
        <fullName evidence="1">IGP synthase subunit HisF</fullName>
    </alternativeName>
    <alternativeName>
        <fullName evidence="1">ImGP synthase subunit HisF</fullName>
        <shortName evidence="1">IGPS subunit HisF</shortName>
    </alternativeName>
</protein>
<reference key="1">
    <citation type="submission" date="2008-02" db="EMBL/GenBank/DDBJ databases">
        <title>Complete sequence of Escherichia coli C str. ATCC 8739.</title>
        <authorList>
            <person name="Copeland A."/>
            <person name="Lucas S."/>
            <person name="Lapidus A."/>
            <person name="Glavina del Rio T."/>
            <person name="Dalin E."/>
            <person name="Tice H."/>
            <person name="Bruce D."/>
            <person name="Goodwin L."/>
            <person name="Pitluck S."/>
            <person name="Kiss H."/>
            <person name="Brettin T."/>
            <person name="Detter J.C."/>
            <person name="Han C."/>
            <person name="Kuske C.R."/>
            <person name="Schmutz J."/>
            <person name="Larimer F."/>
            <person name="Land M."/>
            <person name="Hauser L."/>
            <person name="Kyrpides N."/>
            <person name="Mikhailova N."/>
            <person name="Ingram L."/>
            <person name="Richardson P."/>
        </authorList>
    </citation>
    <scope>NUCLEOTIDE SEQUENCE [LARGE SCALE GENOMIC DNA]</scope>
    <source>
        <strain>ATCC 8739 / DSM 1576 / NBRC 3972 / NCIMB 8545 / WDCM 00012 / Crooks</strain>
    </source>
</reference>
<keyword id="KW-0028">Amino-acid biosynthesis</keyword>
<keyword id="KW-0963">Cytoplasm</keyword>
<keyword id="KW-0368">Histidine biosynthesis</keyword>
<keyword id="KW-0456">Lyase</keyword>
<name>HIS6_ECOLC</name>
<feature type="chain" id="PRO_1000084058" description="Imidazole glycerol phosphate synthase subunit HisF">
    <location>
        <begin position="1"/>
        <end position="258"/>
    </location>
</feature>
<feature type="active site" evidence="1">
    <location>
        <position position="11"/>
    </location>
</feature>
<feature type="active site" evidence="1">
    <location>
        <position position="130"/>
    </location>
</feature>
<evidence type="ECO:0000255" key="1">
    <source>
        <dbReference type="HAMAP-Rule" id="MF_01013"/>
    </source>
</evidence>
<accession>B1IZ49</accession>
<gene>
    <name evidence="1" type="primary">hisF</name>
    <name type="ordered locus">EcolC_1617</name>
</gene>
<organism>
    <name type="scientific">Escherichia coli (strain ATCC 8739 / DSM 1576 / NBRC 3972 / NCIMB 8545 / WDCM 00012 / Crooks)</name>
    <dbReference type="NCBI Taxonomy" id="481805"/>
    <lineage>
        <taxon>Bacteria</taxon>
        <taxon>Pseudomonadati</taxon>
        <taxon>Pseudomonadota</taxon>
        <taxon>Gammaproteobacteria</taxon>
        <taxon>Enterobacterales</taxon>
        <taxon>Enterobacteriaceae</taxon>
        <taxon>Escherichia</taxon>
    </lineage>
</organism>